<organism>
    <name type="scientific">Thermoplasma volcanium (strain ATCC 51530 / DSM 4299 / JCM 9571 / NBRC 15438 / GSS1)</name>
    <dbReference type="NCBI Taxonomy" id="273116"/>
    <lineage>
        <taxon>Archaea</taxon>
        <taxon>Methanobacteriati</taxon>
        <taxon>Thermoplasmatota</taxon>
        <taxon>Thermoplasmata</taxon>
        <taxon>Thermoplasmatales</taxon>
        <taxon>Thermoplasmataceae</taxon>
        <taxon>Thermoplasma</taxon>
    </lineage>
</organism>
<name>RLME_THEVO</name>
<reference key="1">
    <citation type="journal article" date="2000" name="Proc. Natl. Acad. Sci. U.S.A.">
        <title>Archaeal adaptation to higher temperatures revealed by genomic sequence of Thermoplasma volcanium.</title>
        <authorList>
            <person name="Kawashima T."/>
            <person name="Amano N."/>
            <person name="Koike H."/>
            <person name="Makino S."/>
            <person name="Higuchi S."/>
            <person name="Kawashima-Ohya Y."/>
            <person name="Watanabe K."/>
            <person name="Yamazaki M."/>
            <person name="Kanehori K."/>
            <person name="Kawamoto T."/>
            <person name="Nunoshiba T."/>
            <person name="Yamamoto Y."/>
            <person name="Aramaki H."/>
            <person name="Makino K."/>
            <person name="Suzuki M."/>
        </authorList>
    </citation>
    <scope>NUCLEOTIDE SEQUENCE [LARGE SCALE GENOMIC DNA]</scope>
    <source>
        <strain>ATCC 51530 / DSM 4299 / JCM 9571 / NBRC 15438 / GSS1</strain>
    </source>
</reference>
<proteinExistence type="evidence at protein level"/>
<protein>
    <recommendedName>
        <fullName evidence="1">Ribosomal RNA large subunit methyltransferase E</fullName>
        <ecNumber evidence="1">2.1.1.166</ecNumber>
    </recommendedName>
    <alternativeName>
        <fullName evidence="1">23S rRNA Um2552 methyltransferase</fullName>
    </alternativeName>
    <alternativeName>
        <fullName evidence="1">rRNA (uridine-2'-O-)-methyltransferase</fullName>
    </alternativeName>
</protein>
<accession>Q97C13</accession>
<keyword id="KW-0002">3D-structure</keyword>
<keyword id="KW-0963">Cytoplasm</keyword>
<keyword id="KW-0489">Methyltransferase</keyword>
<keyword id="KW-0698">rRNA processing</keyword>
<keyword id="KW-0949">S-adenosyl-L-methionine</keyword>
<keyword id="KW-0808">Transferase</keyword>
<dbReference type="EC" id="2.1.1.166" evidence="1"/>
<dbReference type="EMBL" id="BA000011">
    <property type="protein sequence ID" value="BAB59434.1"/>
    <property type="molecule type" value="Genomic_DNA"/>
</dbReference>
<dbReference type="RefSeq" id="WP_010916547.1">
    <property type="nucleotide sequence ID" value="NC_002689.2"/>
</dbReference>
<dbReference type="PDB" id="3DOU">
    <property type="method" value="X-ray"/>
    <property type="resolution" value="1.45 A"/>
    <property type="chains" value="A=17-196"/>
</dbReference>
<dbReference type="PDBsum" id="3DOU"/>
<dbReference type="SMR" id="Q97C13"/>
<dbReference type="STRING" id="273116.gene:9381066"/>
<dbReference type="PaxDb" id="273116-14324507"/>
<dbReference type="DNASU" id="1440805"/>
<dbReference type="GeneID" id="1440805"/>
<dbReference type="KEGG" id="tvo:TVG0303954"/>
<dbReference type="eggNOG" id="arCOG00079">
    <property type="taxonomic scope" value="Archaea"/>
</dbReference>
<dbReference type="HOGENOM" id="CLU_009422_4_4_2"/>
<dbReference type="OrthoDB" id="26307at2157"/>
<dbReference type="PhylomeDB" id="Q97C13"/>
<dbReference type="EvolutionaryTrace" id="Q97C13"/>
<dbReference type="Proteomes" id="UP000001017">
    <property type="component" value="Chromosome"/>
</dbReference>
<dbReference type="GO" id="GO:0005737">
    <property type="term" value="C:cytoplasm"/>
    <property type="evidence" value="ECO:0007669"/>
    <property type="project" value="UniProtKB-SubCell"/>
</dbReference>
<dbReference type="GO" id="GO:0008650">
    <property type="term" value="F:rRNA (uridine-2'-O-)-methyltransferase activity"/>
    <property type="evidence" value="ECO:0007669"/>
    <property type="project" value="UniProtKB-UniRule"/>
</dbReference>
<dbReference type="Gene3D" id="3.40.50.150">
    <property type="entry name" value="Vaccinia Virus protein VP39"/>
    <property type="match status" value="1"/>
</dbReference>
<dbReference type="HAMAP" id="MF_01547">
    <property type="entry name" value="RNA_methyltr_E"/>
    <property type="match status" value="1"/>
</dbReference>
<dbReference type="InterPro" id="IPR050082">
    <property type="entry name" value="RNA_methyltr_RlmE"/>
</dbReference>
<dbReference type="InterPro" id="IPR002877">
    <property type="entry name" value="RNA_MeTrfase_FtsJ_dom"/>
</dbReference>
<dbReference type="InterPro" id="IPR015507">
    <property type="entry name" value="rRNA-MeTfrase_E"/>
</dbReference>
<dbReference type="InterPro" id="IPR029063">
    <property type="entry name" value="SAM-dependent_MTases_sf"/>
</dbReference>
<dbReference type="PANTHER" id="PTHR10920:SF13">
    <property type="entry name" value="PRE-RRNA 2'-O-RIBOSE RNA METHYLTRANSFERASE FTSJ3"/>
    <property type="match status" value="1"/>
</dbReference>
<dbReference type="PANTHER" id="PTHR10920">
    <property type="entry name" value="RIBOSOMAL RNA METHYLTRANSFERASE"/>
    <property type="match status" value="1"/>
</dbReference>
<dbReference type="Pfam" id="PF01728">
    <property type="entry name" value="FtsJ"/>
    <property type="match status" value="1"/>
</dbReference>
<dbReference type="PIRSF" id="PIRSF005461">
    <property type="entry name" value="23S_rRNA_mtase"/>
    <property type="match status" value="1"/>
</dbReference>
<dbReference type="SUPFAM" id="SSF53335">
    <property type="entry name" value="S-adenosyl-L-methionine-dependent methyltransferases"/>
    <property type="match status" value="1"/>
</dbReference>
<sequence>MTGDRRDEYYWKAKKEQLRSRAAFKLEFLLDRYRVVRKGDAVIEIGSSPGGWTQVLNSLARKIISIDLQEMEEIAGVRFIRCDIFKETIFDDIDRALREEGIEKVDDVVSDAMAKVSGIPSRDHAVSYQIGQRVMEIAVRYLRNGGNVLLKQFQGDMTNDFIAIWRKNFSSYKISKPPASRGSSSEIYIMFFGFKAP</sequence>
<feature type="chain" id="PRO_0000155574" description="Ribosomal RNA large subunit methyltransferase E">
    <location>
        <begin position="1"/>
        <end position="197"/>
    </location>
</feature>
<feature type="active site" description="Proton acceptor" evidence="1">
    <location>
        <position position="151"/>
    </location>
</feature>
<feature type="binding site" evidence="1">
    <location>
        <position position="50"/>
    </location>
    <ligand>
        <name>S-adenosyl-L-methionine</name>
        <dbReference type="ChEBI" id="CHEBI:59789"/>
    </ligand>
</feature>
<feature type="binding site" evidence="1">
    <location>
        <position position="52"/>
    </location>
    <ligand>
        <name>S-adenosyl-L-methionine</name>
        <dbReference type="ChEBI" id="CHEBI:59789"/>
    </ligand>
</feature>
<feature type="binding site" evidence="1">
    <location>
        <position position="67"/>
    </location>
    <ligand>
        <name>S-adenosyl-L-methionine</name>
        <dbReference type="ChEBI" id="CHEBI:59789"/>
    </ligand>
</feature>
<feature type="binding site" evidence="1">
    <location>
        <position position="83"/>
    </location>
    <ligand>
        <name>S-adenosyl-L-methionine</name>
        <dbReference type="ChEBI" id="CHEBI:59789"/>
    </ligand>
</feature>
<feature type="binding site" evidence="1">
    <location>
        <position position="111"/>
    </location>
    <ligand>
        <name>S-adenosyl-L-methionine</name>
        <dbReference type="ChEBI" id="CHEBI:59789"/>
    </ligand>
</feature>
<feature type="helix" evidence="2">
    <location>
        <begin position="21"/>
        <end position="33"/>
    </location>
</feature>
<feature type="strand" evidence="2">
    <location>
        <begin position="41"/>
        <end position="46"/>
    </location>
</feature>
<feature type="helix" evidence="2">
    <location>
        <begin position="51"/>
        <end position="56"/>
    </location>
</feature>
<feature type="turn" evidence="2">
    <location>
        <begin position="57"/>
        <end position="59"/>
    </location>
</feature>
<feature type="strand" evidence="2">
    <location>
        <begin position="61"/>
        <end position="69"/>
    </location>
</feature>
<feature type="strand" evidence="2">
    <location>
        <begin position="78"/>
        <end position="81"/>
    </location>
</feature>
<feature type="strand" evidence="2">
    <location>
        <begin position="86"/>
        <end position="88"/>
    </location>
</feature>
<feature type="helix" evidence="2">
    <location>
        <begin position="89"/>
        <end position="100"/>
    </location>
</feature>
<feature type="strand" evidence="2">
    <location>
        <begin position="103"/>
        <end position="110"/>
    </location>
</feature>
<feature type="helix" evidence="2">
    <location>
        <begin position="120"/>
        <end position="141"/>
    </location>
</feature>
<feature type="strand" evidence="2">
    <location>
        <begin position="142"/>
        <end position="153"/>
    </location>
</feature>
<feature type="helix" evidence="2">
    <location>
        <begin position="158"/>
        <end position="165"/>
    </location>
</feature>
<feature type="helix" evidence="2">
    <location>
        <begin position="166"/>
        <end position="168"/>
    </location>
</feature>
<feature type="strand" evidence="2">
    <location>
        <begin position="169"/>
        <end position="175"/>
    </location>
</feature>
<feature type="strand" evidence="2">
    <location>
        <begin position="186"/>
        <end position="194"/>
    </location>
</feature>
<evidence type="ECO:0000255" key="1">
    <source>
        <dbReference type="HAMAP-Rule" id="MF_01547"/>
    </source>
</evidence>
<evidence type="ECO:0007829" key="2">
    <source>
        <dbReference type="PDB" id="3DOU"/>
    </source>
</evidence>
<comment type="function">
    <text evidence="1">Specifically methylates the uridine in position 2552 of 23S rRNA at the 2'-O position of the ribose in the fully assembled 50S ribosomal subunit.</text>
</comment>
<comment type="catalytic activity">
    <reaction evidence="1">
        <text>uridine(2552) in 23S rRNA + S-adenosyl-L-methionine = 2'-O-methyluridine(2552) in 23S rRNA + S-adenosyl-L-homocysteine + H(+)</text>
        <dbReference type="Rhea" id="RHEA:42720"/>
        <dbReference type="Rhea" id="RHEA-COMP:10202"/>
        <dbReference type="Rhea" id="RHEA-COMP:10203"/>
        <dbReference type="ChEBI" id="CHEBI:15378"/>
        <dbReference type="ChEBI" id="CHEBI:57856"/>
        <dbReference type="ChEBI" id="CHEBI:59789"/>
        <dbReference type="ChEBI" id="CHEBI:65315"/>
        <dbReference type="ChEBI" id="CHEBI:74478"/>
        <dbReference type="EC" id="2.1.1.166"/>
    </reaction>
</comment>
<comment type="subcellular location">
    <subcellularLocation>
        <location evidence="1">Cytoplasm</location>
    </subcellularLocation>
</comment>
<comment type="similarity">
    <text evidence="1">Belongs to the class I-like SAM-binding methyltransferase superfamily. RNA methyltransferase RlmE family.</text>
</comment>
<gene>
    <name evidence="1" type="primary">rlmE</name>
    <name evidence="1" type="synonym">rrmJ</name>
    <name type="ordered locus">TV0292</name>
    <name type="ORF">TVG0303954</name>
</gene>